<evidence type="ECO:0000255" key="1">
    <source>
        <dbReference type="HAMAP-Rule" id="MF_01389"/>
    </source>
</evidence>
<sequence>MTERSPLRVGIGGPVGSGKTALTLNLCRALRDKYNMAVVTNDIYTKEDSNFLTRNEAMSPDRIVGVETGGCPHTAIREDASINLAAIDDLCEKFDGLELIIIESGGDNLAATFSPELSDLTLYVIDVAGGEKIPRKGGPGITKSDLLIINKTDLAPMVGANLDVMDQDAKRMRGEKPFLFSNMKTQDGLEEIIQFIEKQGLFKA</sequence>
<protein>
    <recommendedName>
        <fullName evidence="1">Urease accessory protein UreG</fullName>
    </recommendedName>
</protein>
<organism>
    <name type="scientific">Acinetobacter baumannii (strain SDF)</name>
    <dbReference type="NCBI Taxonomy" id="509170"/>
    <lineage>
        <taxon>Bacteria</taxon>
        <taxon>Pseudomonadati</taxon>
        <taxon>Pseudomonadota</taxon>
        <taxon>Gammaproteobacteria</taxon>
        <taxon>Moraxellales</taxon>
        <taxon>Moraxellaceae</taxon>
        <taxon>Acinetobacter</taxon>
        <taxon>Acinetobacter calcoaceticus/baumannii complex</taxon>
    </lineage>
</organism>
<reference key="1">
    <citation type="journal article" date="2008" name="PLoS ONE">
        <title>Comparative analysis of Acinetobacters: three genomes for three lifestyles.</title>
        <authorList>
            <person name="Vallenet D."/>
            <person name="Nordmann P."/>
            <person name="Barbe V."/>
            <person name="Poirel L."/>
            <person name="Mangenot S."/>
            <person name="Bataille E."/>
            <person name="Dossat C."/>
            <person name="Gas S."/>
            <person name="Kreimeyer A."/>
            <person name="Lenoble P."/>
            <person name="Oztas S."/>
            <person name="Poulain J."/>
            <person name="Segurens B."/>
            <person name="Robert C."/>
            <person name="Abergel C."/>
            <person name="Claverie J.-M."/>
            <person name="Raoult D."/>
            <person name="Medigue C."/>
            <person name="Weissenbach J."/>
            <person name="Cruveiller S."/>
        </authorList>
    </citation>
    <scope>NUCLEOTIDE SEQUENCE [LARGE SCALE GENOMIC DNA]</scope>
    <source>
        <strain>SDF</strain>
    </source>
</reference>
<name>UREG_ACIBS</name>
<gene>
    <name evidence="1" type="primary">ureG</name>
    <name type="ordered locus">ABSDF2370</name>
</gene>
<dbReference type="EMBL" id="CU468230">
    <property type="protein sequence ID" value="CAP01683.1"/>
    <property type="molecule type" value="Genomic_DNA"/>
</dbReference>
<dbReference type="SMR" id="B0VSB5"/>
<dbReference type="KEGG" id="abm:ABSDF2370"/>
<dbReference type="HOGENOM" id="CLU_072144_1_0_6"/>
<dbReference type="Proteomes" id="UP000001741">
    <property type="component" value="Chromosome"/>
</dbReference>
<dbReference type="GO" id="GO:0005737">
    <property type="term" value="C:cytoplasm"/>
    <property type="evidence" value="ECO:0007669"/>
    <property type="project" value="UniProtKB-SubCell"/>
</dbReference>
<dbReference type="GO" id="GO:0005525">
    <property type="term" value="F:GTP binding"/>
    <property type="evidence" value="ECO:0007669"/>
    <property type="project" value="UniProtKB-KW"/>
</dbReference>
<dbReference type="GO" id="GO:0003924">
    <property type="term" value="F:GTPase activity"/>
    <property type="evidence" value="ECO:0007669"/>
    <property type="project" value="InterPro"/>
</dbReference>
<dbReference type="GO" id="GO:0016151">
    <property type="term" value="F:nickel cation binding"/>
    <property type="evidence" value="ECO:0007669"/>
    <property type="project" value="UniProtKB-UniRule"/>
</dbReference>
<dbReference type="GO" id="GO:0043419">
    <property type="term" value="P:urea catabolic process"/>
    <property type="evidence" value="ECO:0007669"/>
    <property type="project" value="InterPro"/>
</dbReference>
<dbReference type="CDD" id="cd05540">
    <property type="entry name" value="UreG"/>
    <property type="match status" value="1"/>
</dbReference>
<dbReference type="FunFam" id="3.40.50.300:FF:000208">
    <property type="entry name" value="Urease accessory protein UreG"/>
    <property type="match status" value="1"/>
</dbReference>
<dbReference type="Gene3D" id="3.40.50.300">
    <property type="entry name" value="P-loop containing nucleotide triphosphate hydrolases"/>
    <property type="match status" value="1"/>
</dbReference>
<dbReference type="HAMAP" id="MF_01389">
    <property type="entry name" value="UreG"/>
    <property type="match status" value="1"/>
</dbReference>
<dbReference type="InterPro" id="IPR003495">
    <property type="entry name" value="CobW/HypB/UreG_nucleotide-bd"/>
</dbReference>
<dbReference type="InterPro" id="IPR027417">
    <property type="entry name" value="P-loop_NTPase"/>
</dbReference>
<dbReference type="InterPro" id="IPR004400">
    <property type="entry name" value="UreG"/>
</dbReference>
<dbReference type="NCBIfam" id="TIGR00101">
    <property type="entry name" value="ureG"/>
    <property type="match status" value="1"/>
</dbReference>
<dbReference type="PANTHER" id="PTHR31715">
    <property type="entry name" value="UREASE ACCESSORY PROTEIN G"/>
    <property type="match status" value="1"/>
</dbReference>
<dbReference type="PANTHER" id="PTHR31715:SF0">
    <property type="entry name" value="UREASE ACCESSORY PROTEIN G"/>
    <property type="match status" value="1"/>
</dbReference>
<dbReference type="Pfam" id="PF02492">
    <property type="entry name" value="cobW"/>
    <property type="match status" value="1"/>
</dbReference>
<dbReference type="PIRSF" id="PIRSF005624">
    <property type="entry name" value="Ni-bind_GTPase"/>
    <property type="match status" value="1"/>
</dbReference>
<dbReference type="SUPFAM" id="SSF52540">
    <property type="entry name" value="P-loop containing nucleoside triphosphate hydrolases"/>
    <property type="match status" value="1"/>
</dbReference>
<proteinExistence type="inferred from homology"/>
<feature type="chain" id="PRO_1000145159" description="Urease accessory protein UreG">
    <location>
        <begin position="1"/>
        <end position="204"/>
    </location>
</feature>
<feature type="binding site" evidence="1">
    <location>
        <begin position="13"/>
        <end position="20"/>
    </location>
    <ligand>
        <name>GTP</name>
        <dbReference type="ChEBI" id="CHEBI:37565"/>
    </ligand>
</feature>
<accession>B0VSB5</accession>
<comment type="function">
    <text evidence="1">Facilitates the functional incorporation of the urease nickel metallocenter. This process requires GTP hydrolysis, probably effectuated by UreG.</text>
</comment>
<comment type="subunit">
    <text evidence="1">Homodimer. UreD, UreF and UreG form a complex that acts as a GTP-hydrolysis-dependent molecular chaperone, activating the urease apoprotein by helping to assemble the nickel containing metallocenter of UreC. The UreE protein probably delivers the nickel.</text>
</comment>
<comment type="subcellular location">
    <subcellularLocation>
        <location evidence="1">Cytoplasm</location>
    </subcellularLocation>
</comment>
<comment type="similarity">
    <text evidence="1">Belongs to the SIMIBI class G3E GTPase family. UreG subfamily.</text>
</comment>
<keyword id="KW-0143">Chaperone</keyword>
<keyword id="KW-0963">Cytoplasm</keyword>
<keyword id="KW-0342">GTP-binding</keyword>
<keyword id="KW-0996">Nickel insertion</keyword>
<keyword id="KW-0547">Nucleotide-binding</keyword>